<accession>A9A9U9</accession>
<name>RPO1C_METM6</name>
<evidence type="ECO:0000255" key="1">
    <source>
        <dbReference type="HAMAP-Rule" id="MF_00411"/>
    </source>
</evidence>
<proteinExistence type="inferred from homology"/>
<sequence length="386" mass="42796">MQMADLEKKLENSVLPPLLKRELSEKILKEEISEEYLVDEIISETIRAYERTLVEPGEAVGVVAAQSIGEPGTQMTMRTFHYAGVAELNVTLGLPRMIEIVDARKEPSTPTMTIYLNDDFKGDREKASMVAKNIESTNVESVSEDISVDLINECITIVLNTHQLESRGLTVADVIESIKSKMKLKIEDHENVLNLKIKTPSLKALRKRLPKVRAIHLKGVQNIKRVIIRKEVDEYILYSEGSNIKEVFDIEGVDTTKTTTNNIVEIQDVLGIEAARNAIIYEMDATLGNQGLTVDKRHLMMVADLMCTDGVVKPIGRHGIGGEKASVLARAAFEETVKHLYSASMRGYVDELGGVVENIIVGKPIAMGTGCIDVCIDKTYEEGKEL</sequence>
<dbReference type="EC" id="2.7.7.6" evidence="1"/>
<dbReference type="EMBL" id="CP000867">
    <property type="protein sequence ID" value="ABX02122.1"/>
    <property type="molecule type" value="Genomic_DNA"/>
</dbReference>
<dbReference type="SMR" id="A9A9U9"/>
<dbReference type="STRING" id="444158.MmarC6_1309"/>
<dbReference type="KEGG" id="mmx:MmarC6_1309"/>
<dbReference type="eggNOG" id="arCOG04256">
    <property type="taxonomic scope" value="Archaea"/>
</dbReference>
<dbReference type="HOGENOM" id="CLU_037097_1_0_2"/>
<dbReference type="OrthoDB" id="372142at2157"/>
<dbReference type="PhylomeDB" id="A9A9U9"/>
<dbReference type="GO" id="GO:0005737">
    <property type="term" value="C:cytoplasm"/>
    <property type="evidence" value="ECO:0007669"/>
    <property type="project" value="UniProtKB-SubCell"/>
</dbReference>
<dbReference type="GO" id="GO:0000428">
    <property type="term" value="C:DNA-directed RNA polymerase complex"/>
    <property type="evidence" value="ECO:0007669"/>
    <property type="project" value="UniProtKB-KW"/>
</dbReference>
<dbReference type="GO" id="GO:0003677">
    <property type="term" value="F:DNA binding"/>
    <property type="evidence" value="ECO:0007669"/>
    <property type="project" value="UniProtKB-UniRule"/>
</dbReference>
<dbReference type="GO" id="GO:0003899">
    <property type="term" value="F:DNA-directed RNA polymerase activity"/>
    <property type="evidence" value="ECO:0007669"/>
    <property type="project" value="UniProtKB-UniRule"/>
</dbReference>
<dbReference type="GO" id="GO:0006351">
    <property type="term" value="P:DNA-templated transcription"/>
    <property type="evidence" value="ECO:0007669"/>
    <property type="project" value="UniProtKB-UniRule"/>
</dbReference>
<dbReference type="CDD" id="cd06528">
    <property type="entry name" value="RNAP_A"/>
    <property type="match status" value="1"/>
</dbReference>
<dbReference type="Gene3D" id="1.10.150.390">
    <property type="match status" value="1"/>
</dbReference>
<dbReference type="HAMAP" id="MF_00411">
    <property type="entry name" value="RNApol_arch_Rpo1C"/>
    <property type="match status" value="1"/>
</dbReference>
<dbReference type="InterPro" id="IPR045867">
    <property type="entry name" value="DNA-dir_RpoC_beta_prime"/>
</dbReference>
<dbReference type="InterPro" id="IPR007081">
    <property type="entry name" value="RNA_pol_Rpb1_5"/>
</dbReference>
<dbReference type="InterPro" id="IPR012757">
    <property type="entry name" value="RPO1C"/>
</dbReference>
<dbReference type="NCBIfam" id="TIGR02389">
    <property type="entry name" value="RNA_pol_rpoA2"/>
    <property type="match status" value="1"/>
</dbReference>
<dbReference type="PANTHER" id="PTHR19376">
    <property type="entry name" value="DNA-DIRECTED RNA POLYMERASE"/>
    <property type="match status" value="1"/>
</dbReference>
<dbReference type="PANTHER" id="PTHR19376:SF32">
    <property type="entry name" value="DNA-DIRECTED RNA POLYMERASE III SUBUNIT RPC1"/>
    <property type="match status" value="1"/>
</dbReference>
<dbReference type="Pfam" id="PF04998">
    <property type="entry name" value="RNA_pol_Rpb1_5"/>
    <property type="match status" value="1"/>
</dbReference>
<dbReference type="SUPFAM" id="SSF64484">
    <property type="entry name" value="beta and beta-prime subunits of DNA dependent RNA-polymerase"/>
    <property type="match status" value="1"/>
</dbReference>
<reference key="1">
    <citation type="submission" date="2007-10" db="EMBL/GenBank/DDBJ databases">
        <title>Complete sequence of Methanococcus maripaludis C6.</title>
        <authorList>
            <consortium name="US DOE Joint Genome Institute"/>
            <person name="Copeland A."/>
            <person name="Lucas S."/>
            <person name="Lapidus A."/>
            <person name="Barry K."/>
            <person name="Glavina del Rio T."/>
            <person name="Dalin E."/>
            <person name="Tice H."/>
            <person name="Pitluck S."/>
            <person name="Clum A."/>
            <person name="Schmutz J."/>
            <person name="Larimer F."/>
            <person name="Land M."/>
            <person name="Hauser L."/>
            <person name="Kyrpides N."/>
            <person name="Mikhailova N."/>
            <person name="Sieprawska-Lupa M."/>
            <person name="Whitman W.B."/>
            <person name="Richardson P."/>
        </authorList>
    </citation>
    <scope>NUCLEOTIDE SEQUENCE [LARGE SCALE GENOMIC DNA]</scope>
    <source>
        <strain>C6 / ATCC BAA-1332</strain>
    </source>
</reference>
<keyword id="KW-0963">Cytoplasm</keyword>
<keyword id="KW-0238">DNA-binding</keyword>
<keyword id="KW-0240">DNA-directed RNA polymerase</keyword>
<keyword id="KW-0548">Nucleotidyltransferase</keyword>
<keyword id="KW-0804">Transcription</keyword>
<keyword id="KW-0808">Transferase</keyword>
<feature type="chain" id="PRO_1000194738" description="DNA-directed RNA polymerase subunit Rpo1C">
    <location>
        <begin position="1"/>
        <end position="386"/>
    </location>
</feature>
<gene>
    <name evidence="1" type="primary">rpo1C</name>
    <name evidence="1" type="synonym">rpoA2</name>
    <name type="ordered locus">MmarC6_1309</name>
</gene>
<comment type="function">
    <text evidence="1">DNA-dependent RNA polymerase (RNAP) catalyzes the transcription of DNA into RNA using the four ribonucleoside triphosphates as substrates. Forms part of the jaw domain.</text>
</comment>
<comment type="catalytic activity">
    <reaction evidence="1">
        <text>RNA(n) + a ribonucleoside 5'-triphosphate = RNA(n+1) + diphosphate</text>
        <dbReference type="Rhea" id="RHEA:21248"/>
        <dbReference type="Rhea" id="RHEA-COMP:14527"/>
        <dbReference type="Rhea" id="RHEA-COMP:17342"/>
        <dbReference type="ChEBI" id="CHEBI:33019"/>
        <dbReference type="ChEBI" id="CHEBI:61557"/>
        <dbReference type="ChEBI" id="CHEBI:140395"/>
        <dbReference type="EC" id="2.7.7.6"/>
    </reaction>
</comment>
<comment type="subunit">
    <text evidence="1">Part of the RNA polymerase complex.</text>
</comment>
<comment type="subcellular location">
    <subcellularLocation>
        <location evidence="1">Cytoplasm</location>
    </subcellularLocation>
</comment>
<comment type="similarity">
    <text evidence="1">Belongs to the RNA polymerase beta' chain family.</text>
</comment>
<organism>
    <name type="scientific">Methanococcus maripaludis (strain C6 / ATCC BAA-1332)</name>
    <dbReference type="NCBI Taxonomy" id="444158"/>
    <lineage>
        <taxon>Archaea</taxon>
        <taxon>Methanobacteriati</taxon>
        <taxon>Methanobacteriota</taxon>
        <taxon>Methanomada group</taxon>
        <taxon>Methanococci</taxon>
        <taxon>Methanococcales</taxon>
        <taxon>Methanococcaceae</taxon>
        <taxon>Methanococcus</taxon>
    </lineage>
</organism>
<protein>
    <recommendedName>
        <fullName evidence="1">DNA-directed RNA polymerase subunit Rpo1C</fullName>
        <ecNumber evidence="1">2.7.7.6</ecNumber>
    </recommendedName>
    <alternativeName>
        <fullName evidence="1">DNA-directed RNA polymerase subunit A''</fullName>
    </alternativeName>
</protein>